<gene>
    <name type="primary">Eepd1</name>
    <name type="synonym">Kiaa1706</name>
</gene>
<evidence type="ECO:0000250" key="1"/>
<evidence type="ECO:0000250" key="2">
    <source>
        <dbReference type="UniProtKB" id="Q7L9B9"/>
    </source>
</evidence>
<evidence type="ECO:0000256" key="3">
    <source>
        <dbReference type="SAM" id="MobiDB-lite"/>
    </source>
</evidence>
<evidence type="ECO:0000305" key="4"/>
<evidence type="ECO:0007744" key="5">
    <source>
    </source>
</evidence>
<evidence type="ECO:0007744" key="6">
    <source>
    </source>
</evidence>
<evidence type="ECO:0007744" key="7">
    <source>
    </source>
</evidence>
<name>EEPD1_MOUSE</name>
<feature type="initiator methionine" description="Removed" evidence="2">
    <location>
        <position position="1"/>
    </location>
</feature>
<feature type="chain" id="PRO_0000317262" description="Endonuclease/exonuclease/phosphatase family domain-containing protein 1">
    <location>
        <begin position="2"/>
        <end position="569"/>
    </location>
</feature>
<feature type="domain" description="HhH">
    <location>
        <begin position="38"/>
        <end position="67"/>
    </location>
</feature>
<feature type="region of interest" description="Disordered" evidence="3">
    <location>
        <begin position="200"/>
        <end position="224"/>
    </location>
</feature>
<feature type="region of interest" description="Disordered" evidence="3">
    <location>
        <begin position="549"/>
        <end position="569"/>
    </location>
</feature>
<feature type="compositionally biased region" description="Polar residues" evidence="3">
    <location>
        <begin position="202"/>
        <end position="211"/>
    </location>
</feature>
<feature type="modified residue" description="Phosphoserine" evidence="2">
    <location>
        <position position="16"/>
    </location>
</feature>
<feature type="modified residue" description="Phosphoserine" evidence="5 7">
    <location>
        <position position="25"/>
    </location>
</feature>
<feature type="modified residue" description="Phosphoserine" evidence="6">
    <location>
        <position position="106"/>
    </location>
</feature>
<feature type="modified residue" description="Phosphoserine" evidence="6">
    <location>
        <position position="110"/>
    </location>
</feature>
<feature type="modified residue" description="Phosphoserine" evidence="2">
    <location>
        <position position="160"/>
    </location>
</feature>
<feature type="modified residue" description="Phosphoserine" evidence="6">
    <location>
        <position position="173"/>
    </location>
</feature>
<feature type="modified residue" description="Phosphothreonine" evidence="7">
    <location>
        <position position="265"/>
    </location>
</feature>
<feature type="lipid moiety-binding region" description="N-myristoyl glycine" evidence="1">
    <location>
        <position position="2"/>
    </location>
</feature>
<feature type="sequence conflict" description="In Ref. 2; BAB26125." evidence="4" ref="2">
    <original>F</original>
    <variation>L</variation>
    <location>
        <position position="30"/>
    </location>
</feature>
<feature type="sequence conflict" description="In Ref. 3; AAH25571." evidence="4" ref="3">
    <original>A</original>
    <variation>T</variation>
    <location>
        <position position="389"/>
    </location>
</feature>
<keyword id="KW-0449">Lipoprotein</keyword>
<keyword id="KW-0519">Myristate</keyword>
<keyword id="KW-0597">Phosphoprotein</keyword>
<keyword id="KW-1185">Reference proteome</keyword>
<reference key="1">
    <citation type="journal article" date="2004" name="DNA Res.">
        <title>Prediction of the coding sequences of mouse homologues of KIAA gene: IV. The complete nucleotide sequences of 500 mouse KIAA-homologous cDNAs identified by screening of terminal sequences of cDNA clones randomly sampled from size-fractionated libraries.</title>
        <authorList>
            <person name="Okazaki N."/>
            <person name="Kikuno R."/>
            <person name="Ohara R."/>
            <person name="Inamoto S."/>
            <person name="Koseki H."/>
            <person name="Hiraoka S."/>
            <person name="Saga Y."/>
            <person name="Seino S."/>
            <person name="Nishimura M."/>
            <person name="Kaisho T."/>
            <person name="Hoshino K."/>
            <person name="Kitamura H."/>
            <person name="Nagase T."/>
            <person name="Ohara O."/>
            <person name="Koga H."/>
        </authorList>
    </citation>
    <scope>NUCLEOTIDE SEQUENCE [LARGE SCALE MRNA]</scope>
    <source>
        <tissue>Embryonic intestine</tissue>
    </source>
</reference>
<reference key="2">
    <citation type="journal article" date="2005" name="Science">
        <title>The transcriptional landscape of the mammalian genome.</title>
        <authorList>
            <person name="Carninci P."/>
            <person name="Kasukawa T."/>
            <person name="Katayama S."/>
            <person name="Gough J."/>
            <person name="Frith M.C."/>
            <person name="Maeda N."/>
            <person name="Oyama R."/>
            <person name="Ravasi T."/>
            <person name="Lenhard B."/>
            <person name="Wells C."/>
            <person name="Kodzius R."/>
            <person name="Shimokawa K."/>
            <person name="Bajic V.B."/>
            <person name="Brenner S.E."/>
            <person name="Batalov S."/>
            <person name="Forrest A.R."/>
            <person name="Zavolan M."/>
            <person name="Davis M.J."/>
            <person name="Wilming L.G."/>
            <person name="Aidinis V."/>
            <person name="Allen J.E."/>
            <person name="Ambesi-Impiombato A."/>
            <person name="Apweiler R."/>
            <person name="Aturaliya R.N."/>
            <person name="Bailey T.L."/>
            <person name="Bansal M."/>
            <person name="Baxter L."/>
            <person name="Beisel K.W."/>
            <person name="Bersano T."/>
            <person name="Bono H."/>
            <person name="Chalk A.M."/>
            <person name="Chiu K.P."/>
            <person name="Choudhary V."/>
            <person name="Christoffels A."/>
            <person name="Clutterbuck D.R."/>
            <person name="Crowe M.L."/>
            <person name="Dalla E."/>
            <person name="Dalrymple B.P."/>
            <person name="de Bono B."/>
            <person name="Della Gatta G."/>
            <person name="di Bernardo D."/>
            <person name="Down T."/>
            <person name="Engstrom P."/>
            <person name="Fagiolini M."/>
            <person name="Faulkner G."/>
            <person name="Fletcher C.F."/>
            <person name="Fukushima T."/>
            <person name="Furuno M."/>
            <person name="Futaki S."/>
            <person name="Gariboldi M."/>
            <person name="Georgii-Hemming P."/>
            <person name="Gingeras T.R."/>
            <person name="Gojobori T."/>
            <person name="Green R.E."/>
            <person name="Gustincich S."/>
            <person name="Harbers M."/>
            <person name="Hayashi Y."/>
            <person name="Hensch T.K."/>
            <person name="Hirokawa N."/>
            <person name="Hill D."/>
            <person name="Huminiecki L."/>
            <person name="Iacono M."/>
            <person name="Ikeo K."/>
            <person name="Iwama A."/>
            <person name="Ishikawa T."/>
            <person name="Jakt M."/>
            <person name="Kanapin A."/>
            <person name="Katoh M."/>
            <person name="Kawasawa Y."/>
            <person name="Kelso J."/>
            <person name="Kitamura H."/>
            <person name="Kitano H."/>
            <person name="Kollias G."/>
            <person name="Krishnan S.P."/>
            <person name="Kruger A."/>
            <person name="Kummerfeld S.K."/>
            <person name="Kurochkin I.V."/>
            <person name="Lareau L.F."/>
            <person name="Lazarevic D."/>
            <person name="Lipovich L."/>
            <person name="Liu J."/>
            <person name="Liuni S."/>
            <person name="McWilliam S."/>
            <person name="Madan Babu M."/>
            <person name="Madera M."/>
            <person name="Marchionni L."/>
            <person name="Matsuda H."/>
            <person name="Matsuzawa S."/>
            <person name="Miki H."/>
            <person name="Mignone F."/>
            <person name="Miyake S."/>
            <person name="Morris K."/>
            <person name="Mottagui-Tabar S."/>
            <person name="Mulder N."/>
            <person name="Nakano N."/>
            <person name="Nakauchi H."/>
            <person name="Ng P."/>
            <person name="Nilsson R."/>
            <person name="Nishiguchi S."/>
            <person name="Nishikawa S."/>
            <person name="Nori F."/>
            <person name="Ohara O."/>
            <person name="Okazaki Y."/>
            <person name="Orlando V."/>
            <person name="Pang K.C."/>
            <person name="Pavan W.J."/>
            <person name="Pavesi G."/>
            <person name="Pesole G."/>
            <person name="Petrovsky N."/>
            <person name="Piazza S."/>
            <person name="Reed J."/>
            <person name="Reid J.F."/>
            <person name="Ring B.Z."/>
            <person name="Ringwald M."/>
            <person name="Rost B."/>
            <person name="Ruan Y."/>
            <person name="Salzberg S.L."/>
            <person name="Sandelin A."/>
            <person name="Schneider C."/>
            <person name="Schoenbach C."/>
            <person name="Sekiguchi K."/>
            <person name="Semple C.A."/>
            <person name="Seno S."/>
            <person name="Sessa L."/>
            <person name="Sheng Y."/>
            <person name="Shibata Y."/>
            <person name="Shimada H."/>
            <person name="Shimada K."/>
            <person name="Silva D."/>
            <person name="Sinclair B."/>
            <person name="Sperling S."/>
            <person name="Stupka E."/>
            <person name="Sugiura K."/>
            <person name="Sultana R."/>
            <person name="Takenaka Y."/>
            <person name="Taki K."/>
            <person name="Tammoja K."/>
            <person name="Tan S.L."/>
            <person name="Tang S."/>
            <person name="Taylor M.S."/>
            <person name="Tegner J."/>
            <person name="Teichmann S.A."/>
            <person name="Ueda H.R."/>
            <person name="van Nimwegen E."/>
            <person name="Verardo R."/>
            <person name="Wei C.L."/>
            <person name="Yagi K."/>
            <person name="Yamanishi H."/>
            <person name="Zabarovsky E."/>
            <person name="Zhu S."/>
            <person name="Zimmer A."/>
            <person name="Hide W."/>
            <person name="Bult C."/>
            <person name="Grimmond S.M."/>
            <person name="Teasdale R.D."/>
            <person name="Liu E.T."/>
            <person name="Brusic V."/>
            <person name="Quackenbush J."/>
            <person name="Wahlestedt C."/>
            <person name="Mattick J.S."/>
            <person name="Hume D.A."/>
            <person name="Kai C."/>
            <person name="Sasaki D."/>
            <person name="Tomaru Y."/>
            <person name="Fukuda S."/>
            <person name="Kanamori-Katayama M."/>
            <person name="Suzuki M."/>
            <person name="Aoki J."/>
            <person name="Arakawa T."/>
            <person name="Iida J."/>
            <person name="Imamura K."/>
            <person name="Itoh M."/>
            <person name="Kato T."/>
            <person name="Kawaji H."/>
            <person name="Kawagashira N."/>
            <person name="Kawashima T."/>
            <person name="Kojima M."/>
            <person name="Kondo S."/>
            <person name="Konno H."/>
            <person name="Nakano K."/>
            <person name="Ninomiya N."/>
            <person name="Nishio T."/>
            <person name="Okada M."/>
            <person name="Plessy C."/>
            <person name="Shibata K."/>
            <person name="Shiraki T."/>
            <person name="Suzuki S."/>
            <person name="Tagami M."/>
            <person name="Waki K."/>
            <person name="Watahiki A."/>
            <person name="Okamura-Oho Y."/>
            <person name="Suzuki H."/>
            <person name="Kawai J."/>
            <person name="Hayashizaki Y."/>
        </authorList>
    </citation>
    <scope>NUCLEOTIDE SEQUENCE [LARGE SCALE MRNA]</scope>
    <source>
        <strain>C57BL/6J</strain>
        <tissue>Tongue</tissue>
    </source>
</reference>
<reference key="3">
    <citation type="journal article" date="2004" name="Genome Res.">
        <title>The status, quality, and expansion of the NIH full-length cDNA project: the Mammalian Gene Collection (MGC).</title>
        <authorList>
            <consortium name="The MGC Project Team"/>
        </authorList>
    </citation>
    <scope>NUCLEOTIDE SEQUENCE [LARGE SCALE MRNA]</scope>
    <source>
        <strain>FVB/N</strain>
        <tissue>Mammary tumor</tissue>
    </source>
</reference>
<reference key="4">
    <citation type="journal article" date="2007" name="Proc. Natl. Acad. Sci. U.S.A.">
        <title>Large-scale phosphorylation analysis of mouse liver.</title>
        <authorList>
            <person name="Villen J."/>
            <person name="Beausoleil S.A."/>
            <person name="Gerber S.A."/>
            <person name="Gygi S.P."/>
        </authorList>
    </citation>
    <scope>PHOSPHORYLATION [LARGE SCALE ANALYSIS] AT SER-25</scope>
    <scope>IDENTIFICATION BY MASS SPECTROMETRY [LARGE SCALE ANALYSIS]</scope>
    <source>
        <tissue>Liver</tissue>
    </source>
</reference>
<reference key="5">
    <citation type="journal article" date="2009" name="Immunity">
        <title>The phagosomal proteome in interferon-gamma-activated macrophages.</title>
        <authorList>
            <person name="Trost M."/>
            <person name="English L."/>
            <person name="Lemieux S."/>
            <person name="Courcelles M."/>
            <person name="Desjardins M."/>
            <person name="Thibault P."/>
        </authorList>
    </citation>
    <scope>PHOSPHORYLATION [LARGE SCALE ANALYSIS] AT SER-106; SER-110 AND SER-173</scope>
    <scope>IDENTIFICATION BY MASS SPECTROMETRY [LARGE SCALE ANALYSIS]</scope>
</reference>
<reference key="6">
    <citation type="journal article" date="2010" name="Cell">
        <title>A tissue-specific atlas of mouse protein phosphorylation and expression.</title>
        <authorList>
            <person name="Huttlin E.L."/>
            <person name="Jedrychowski M.P."/>
            <person name="Elias J.E."/>
            <person name="Goswami T."/>
            <person name="Rad R."/>
            <person name="Beausoleil S.A."/>
            <person name="Villen J."/>
            <person name="Haas W."/>
            <person name="Sowa M.E."/>
            <person name="Gygi S.P."/>
        </authorList>
    </citation>
    <scope>PHOSPHORYLATION [LARGE SCALE ANALYSIS] AT SER-25 AND THR-265</scope>
    <scope>IDENTIFICATION BY MASS SPECTROMETRY [LARGE SCALE ANALYSIS]</scope>
    <source>
        <tissue>Brain</tissue>
        <tissue>Brown adipose tissue</tissue>
        <tissue>Heart</tissue>
        <tissue>Kidney</tissue>
        <tissue>Liver</tissue>
        <tissue>Lung</tissue>
        <tissue>Spleen</tissue>
        <tissue>Testis</tissue>
    </source>
</reference>
<accession>Q3TGW2</accession>
<accession>Q69ZC7</accession>
<accession>Q8K3B5</accession>
<accession>Q9D7J3</accession>
<dbReference type="EMBL" id="AK173239">
    <property type="protein sequence ID" value="BAD32517.1"/>
    <property type="status" value="ALT_INIT"/>
    <property type="molecule type" value="mRNA"/>
</dbReference>
<dbReference type="EMBL" id="AK009180">
    <property type="protein sequence ID" value="BAB26125.1"/>
    <property type="molecule type" value="mRNA"/>
</dbReference>
<dbReference type="EMBL" id="AK168564">
    <property type="protein sequence ID" value="BAE40436.1"/>
    <property type="molecule type" value="mRNA"/>
</dbReference>
<dbReference type="EMBL" id="BC025571">
    <property type="protein sequence ID" value="AAH25571.1"/>
    <property type="molecule type" value="mRNA"/>
</dbReference>
<dbReference type="CCDS" id="CCDS22935.1"/>
<dbReference type="RefSeq" id="NP_080465.3">
    <property type="nucleotide sequence ID" value="NM_026189.3"/>
</dbReference>
<dbReference type="SMR" id="Q3TGW2"/>
<dbReference type="FunCoup" id="Q3TGW2">
    <property type="interactions" value="834"/>
</dbReference>
<dbReference type="STRING" id="10090.ENSMUSP00000047083"/>
<dbReference type="GlyGen" id="Q3TGW2">
    <property type="glycosylation" value="2 sites, 2 N-linked glycans (2 sites)"/>
</dbReference>
<dbReference type="iPTMnet" id="Q3TGW2"/>
<dbReference type="PhosphoSitePlus" id="Q3TGW2"/>
<dbReference type="SwissPalm" id="Q3TGW2"/>
<dbReference type="jPOST" id="Q3TGW2"/>
<dbReference type="PaxDb" id="10090-ENSMUSP00000047083"/>
<dbReference type="PeptideAtlas" id="Q3TGW2"/>
<dbReference type="ProteomicsDB" id="277685"/>
<dbReference type="Antibodypedia" id="26526">
    <property type="antibodies" value="94 antibodies from 19 providers"/>
</dbReference>
<dbReference type="DNASU" id="67484"/>
<dbReference type="Ensembl" id="ENSMUST00000040677.6">
    <property type="protein sequence ID" value="ENSMUSP00000047083.6"/>
    <property type="gene ID" value="ENSMUSG00000036611.6"/>
</dbReference>
<dbReference type="GeneID" id="67484"/>
<dbReference type="KEGG" id="mmu:67484"/>
<dbReference type="UCSC" id="uc009opn.1">
    <property type="organism name" value="mouse"/>
</dbReference>
<dbReference type="AGR" id="MGI:1914734"/>
<dbReference type="CTD" id="80820"/>
<dbReference type="MGI" id="MGI:1914734">
    <property type="gene designation" value="Eepd1"/>
</dbReference>
<dbReference type="VEuPathDB" id="HostDB:ENSMUSG00000036611"/>
<dbReference type="eggNOG" id="KOG1857">
    <property type="taxonomic scope" value="Eukaryota"/>
</dbReference>
<dbReference type="GeneTree" id="ENSGT00390000009677"/>
<dbReference type="HOGENOM" id="CLU_033721_1_0_1"/>
<dbReference type="InParanoid" id="Q3TGW2"/>
<dbReference type="OMA" id="HLVPANT"/>
<dbReference type="OrthoDB" id="6237065at2759"/>
<dbReference type="PhylomeDB" id="Q3TGW2"/>
<dbReference type="TreeFam" id="TF328735"/>
<dbReference type="BioGRID-ORCS" id="67484">
    <property type="hits" value="3 hits in 114 CRISPR screens"/>
</dbReference>
<dbReference type="CD-CODE" id="CE726F99">
    <property type="entry name" value="Postsynaptic density"/>
</dbReference>
<dbReference type="PRO" id="PR:Q3TGW2"/>
<dbReference type="Proteomes" id="UP000000589">
    <property type="component" value="Chromosome 9"/>
</dbReference>
<dbReference type="RNAct" id="Q3TGW2">
    <property type="molecule type" value="protein"/>
</dbReference>
<dbReference type="Bgee" id="ENSMUSG00000036611">
    <property type="expression patterns" value="Expressed in hindlimb stylopod muscle and 193 other cell types or tissues"/>
</dbReference>
<dbReference type="GO" id="GO:0005886">
    <property type="term" value="C:plasma membrane"/>
    <property type="evidence" value="ECO:0007669"/>
    <property type="project" value="Ensembl"/>
</dbReference>
<dbReference type="GO" id="GO:0003824">
    <property type="term" value="F:catalytic activity"/>
    <property type="evidence" value="ECO:0007669"/>
    <property type="project" value="InterPro"/>
</dbReference>
<dbReference type="GO" id="GO:0003677">
    <property type="term" value="F:DNA binding"/>
    <property type="evidence" value="ECO:0007669"/>
    <property type="project" value="InterPro"/>
</dbReference>
<dbReference type="GO" id="GO:0006281">
    <property type="term" value="P:DNA repair"/>
    <property type="evidence" value="ECO:0007669"/>
    <property type="project" value="InterPro"/>
</dbReference>
<dbReference type="GO" id="GO:0010875">
    <property type="term" value="P:positive regulation of cholesterol efflux"/>
    <property type="evidence" value="ECO:0000315"/>
    <property type="project" value="BHF-UCL"/>
</dbReference>
<dbReference type="CDD" id="cd10283">
    <property type="entry name" value="MnuA_DNase1-like"/>
    <property type="match status" value="1"/>
</dbReference>
<dbReference type="Gene3D" id="1.10.150.280">
    <property type="entry name" value="AF1531-like domain"/>
    <property type="match status" value="1"/>
</dbReference>
<dbReference type="Gene3D" id="3.60.10.10">
    <property type="entry name" value="Endonuclease/exonuclease/phosphatase"/>
    <property type="match status" value="1"/>
</dbReference>
<dbReference type="Gene3D" id="1.10.150.320">
    <property type="entry name" value="Photosystem II 12 kDa extrinsic protein"/>
    <property type="match status" value="1"/>
</dbReference>
<dbReference type="InterPro" id="IPR004509">
    <property type="entry name" value="Competence_ComEA_HhH"/>
</dbReference>
<dbReference type="InterPro" id="IPR051675">
    <property type="entry name" value="Endo/Exo/Phosphatase_dom_1"/>
</dbReference>
<dbReference type="InterPro" id="IPR036691">
    <property type="entry name" value="Endo/exonu/phosph_ase_sf"/>
</dbReference>
<dbReference type="InterPro" id="IPR005135">
    <property type="entry name" value="Endo/exonuclease/phosphatase"/>
</dbReference>
<dbReference type="InterPro" id="IPR003583">
    <property type="entry name" value="Hlx-hairpin-Hlx_DNA-bd_motif"/>
</dbReference>
<dbReference type="InterPro" id="IPR010994">
    <property type="entry name" value="RuvA_2-like"/>
</dbReference>
<dbReference type="NCBIfam" id="TIGR00426">
    <property type="entry name" value="competence protein ComEA helix-hairpin-helix repeat region"/>
    <property type="match status" value="1"/>
</dbReference>
<dbReference type="PANTHER" id="PTHR21180">
    <property type="entry name" value="ENDONUCLEASE/EXONUCLEASE/PHOSPHATASE FAMILY DOMAIN-CONTAINING PROTEIN 1"/>
    <property type="match status" value="1"/>
</dbReference>
<dbReference type="PANTHER" id="PTHR21180:SF32">
    <property type="entry name" value="ENDONUCLEASE_EXONUCLEASE_PHOSPHATASE FAMILY DOMAIN-CONTAINING PROTEIN 1"/>
    <property type="match status" value="1"/>
</dbReference>
<dbReference type="Pfam" id="PF03372">
    <property type="entry name" value="Exo_endo_phos"/>
    <property type="match status" value="1"/>
</dbReference>
<dbReference type="Pfam" id="PF12836">
    <property type="entry name" value="HHH_3"/>
    <property type="match status" value="2"/>
</dbReference>
<dbReference type="SMART" id="SM00278">
    <property type="entry name" value="HhH1"/>
    <property type="match status" value="3"/>
</dbReference>
<dbReference type="SUPFAM" id="SSF56219">
    <property type="entry name" value="DNase I-like"/>
    <property type="match status" value="1"/>
</dbReference>
<dbReference type="SUPFAM" id="SSF47781">
    <property type="entry name" value="RuvA domain 2-like"/>
    <property type="match status" value="2"/>
</dbReference>
<proteinExistence type="evidence at protein level"/>
<protein>
    <recommendedName>
        <fullName>Endonuclease/exonuclease/phosphatase family domain-containing protein 1</fullName>
    </recommendedName>
</protein>
<organism>
    <name type="scientific">Mus musculus</name>
    <name type="common">Mouse</name>
    <dbReference type="NCBI Taxonomy" id="10090"/>
    <lineage>
        <taxon>Eukaryota</taxon>
        <taxon>Metazoa</taxon>
        <taxon>Chordata</taxon>
        <taxon>Craniata</taxon>
        <taxon>Vertebrata</taxon>
        <taxon>Euteleostomi</taxon>
        <taxon>Mammalia</taxon>
        <taxon>Eutheria</taxon>
        <taxon>Euarchontoglires</taxon>
        <taxon>Glires</taxon>
        <taxon>Rodentia</taxon>
        <taxon>Myomorpha</taxon>
        <taxon>Muroidea</taxon>
        <taxon>Muridae</taxon>
        <taxon>Murinae</taxon>
        <taxon>Mus</taxon>
        <taxon>Mus</taxon>
    </lineage>
</organism>
<sequence length="569" mass="62953">MGSTLGCHRSIPRDPSDLSHNRKFSAACNFSNILVNQERLNINTATEEELMTLPGVTRAVARSIVEYREYIGGFKKVEDLALVSGVGATKLEQVKFEICVSSKGNSAQHSPSSLRRDLLAEQQPHHLTTTVPLTPRVNINTATLAQLMSVRGLSEKMALSIVDYRREHGPFRSVEDLVRMDGINAAFLDRIRHQVFAERSRPPSTHTNGGLTFTAKPHPSPTSLSLQSEDLDLPPGGPTQIISMRPSVEAFGGMRDGRPVFRLATWNLQGCSVEKANNPGVREVVCMTLLENSIKLLAVQELLDKEALEKFCTELNQPILPNIRKWKGSRGCWRSIVAEKPSNQLQKGPCYSGFLWDTAANVELRDIPGRESSPSNGHAKAVGPSPFLARFKVGSNDLTLVNLQLTALALPGAENSSKNHSDGHRLLNFALTLQETLKGEKDVVILGDFGQGPDSNDYDILRREKFHHLVPAHTFTNISTRNPQGSKSVDNIWISKSLKKVFTGHWAVVREGLTNPWIPDNWSWGGVASEHCPVLAELYMEKDWSKKEVPRNGNGVTLEPSEANIKHER</sequence>
<comment type="sequence caution" evidence="4">
    <conflict type="erroneous initiation">
        <sequence resource="EMBL-CDS" id="BAD32517"/>
    </conflict>
</comment>